<dbReference type="EC" id="2.1.2.10" evidence="1"/>
<dbReference type="EMBL" id="CP000479">
    <property type="protein sequence ID" value="ABK64607.1"/>
    <property type="molecule type" value="Genomic_DNA"/>
</dbReference>
<dbReference type="RefSeq" id="WP_011724703.1">
    <property type="nucleotide sequence ID" value="NC_008595.1"/>
</dbReference>
<dbReference type="SMR" id="A0QEZ6"/>
<dbReference type="KEGG" id="mav:MAV_2280"/>
<dbReference type="HOGENOM" id="CLU_007884_10_2_11"/>
<dbReference type="Proteomes" id="UP000001574">
    <property type="component" value="Chromosome"/>
</dbReference>
<dbReference type="GO" id="GO:0005829">
    <property type="term" value="C:cytosol"/>
    <property type="evidence" value="ECO:0007669"/>
    <property type="project" value="TreeGrafter"/>
</dbReference>
<dbReference type="GO" id="GO:0005960">
    <property type="term" value="C:glycine cleavage complex"/>
    <property type="evidence" value="ECO:0007669"/>
    <property type="project" value="InterPro"/>
</dbReference>
<dbReference type="GO" id="GO:0004047">
    <property type="term" value="F:aminomethyltransferase activity"/>
    <property type="evidence" value="ECO:0007669"/>
    <property type="project" value="UniProtKB-UniRule"/>
</dbReference>
<dbReference type="GO" id="GO:0008483">
    <property type="term" value="F:transaminase activity"/>
    <property type="evidence" value="ECO:0007669"/>
    <property type="project" value="UniProtKB-KW"/>
</dbReference>
<dbReference type="GO" id="GO:0019464">
    <property type="term" value="P:glycine decarboxylation via glycine cleavage system"/>
    <property type="evidence" value="ECO:0007669"/>
    <property type="project" value="UniProtKB-UniRule"/>
</dbReference>
<dbReference type="FunFam" id="3.30.70.1400:FF:000001">
    <property type="entry name" value="Aminomethyltransferase"/>
    <property type="match status" value="1"/>
</dbReference>
<dbReference type="FunFam" id="4.10.1250.10:FF:000001">
    <property type="entry name" value="Aminomethyltransferase"/>
    <property type="match status" value="1"/>
</dbReference>
<dbReference type="Gene3D" id="2.40.30.110">
    <property type="entry name" value="Aminomethyltransferase beta-barrel domains"/>
    <property type="match status" value="1"/>
</dbReference>
<dbReference type="Gene3D" id="3.30.70.1400">
    <property type="entry name" value="Aminomethyltransferase beta-barrel domains"/>
    <property type="match status" value="1"/>
</dbReference>
<dbReference type="Gene3D" id="4.10.1250.10">
    <property type="entry name" value="Aminomethyltransferase fragment"/>
    <property type="match status" value="1"/>
</dbReference>
<dbReference type="Gene3D" id="3.30.1360.120">
    <property type="entry name" value="Probable tRNA modification gtpase trme, domain 1"/>
    <property type="match status" value="1"/>
</dbReference>
<dbReference type="HAMAP" id="MF_00259">
    <property type="entry name" value="GcvT"/>
    <property type="match status" value="1"/>
</dbReference>
<dbReference type="InterPro" id="IPR006223">
    <property type="entry name" value="GCS_T"/>
</dbReference>
<dbReference type="InterPro" id="IPR022903">
    <property type="entry name" value="GCS_T_bac"/>
</dbReference>
<dbReference type="InterPro" id="IPR013977">
    <property type="entry name" value="GCST_C"/>
</dbReference>
<dbReference type="InterPro" id="IPR006222">
    <property type="entry name" value="GCV_T_N"/>
</dbReference>
<dbReference type="InterPro" id="IPR028896">
    <property type="entry name" value="GcvT/YgfZ/DmdA"/>
</dbReference>
<dbReference type="InterPro" id="IPR029043">
    <property type="entry name" value="GcvT/YgfZ_C"/>
</dbReference>
<dbReference type="InterPro" id="IPR027266">
    <property type="entry name" value="TrmE/GcvT_dom1"/>
</dbReference>
<dbReference type="NCBIfam" id="TIGR00528">
    <property type="entry name" value="gcvT"/>
    <property type="match status" value="1"/>
</dbReference>
<dbReference type="NCBIfam" id="NF001567">
    <property type="entry name" value="PRK00389.1"/>
    <property type="match status" value="1"/>
</dbReference>
<dbReference type="PANTHER" id="PTHR43757">
    <property type="entry name" value="AMINOMETHYLTRANSFERASE"/>
    <property type="match status" value="1"/>
</dbReference>
<dbReference type="PANTHER" id="PTHR43757:SF2">
    <property type="entry name" value="AMINOMETHYLTRANSFERASE, MITOCHONDRIAL"/>
    <property type="match status" value="1"/>
</dbReference>
<dbReference type="Pfam" id="PF01571">
    <property type="entry name" value="GCV_T"/>
    <property type="match status" value="1"/>
</dbReference>
<dbReference type="Pfam" id="PF08669">
    <property type="entry name" value="GCV_T_C"/>
    <property type="match status" value="1"/>
</dbReference>
<dbReference type="PIRSF" id="PIRSF006487">
    <property type="entry name" value="GcvT"/>
    <property type="match status" value="1"/>
</dbReference>
<dbReference type="SUPFAM" id="SSF101790">
    <property type="entry name" value="Aminomethyltransferase beta-barrel domain"/>
    <property type="match status" value="1"/>
</dbReference>
<dbReference type="SUPFAM" id="SSF103025">
    <property type="entry name" value="Folate-binding domain"/>
    <property type="match status" value="1"/>
</dbReference>
<keyword id="KW-0032">Aminotransferase</keyword>
<keyword id="KW-0808">Transferase</keyword>
<sequence length="367" mass="38785">MSNEADLLHGPLEDRHRDLGASFAEFGGWLMPVSYAGTVSEHNATRNAVGLFDVSHLGKALVRGTGAARFVNSALTNDLNRIGPGKAQYTLCCNESGGVIDDLIAYYVDDDEIFLVPNAANTAAVVEALQGAAPAGVTVSNLHRSYAVLAVQGPRSADVLAELGLPSDMDYMAYADTSFRQVPVRVCRTGYTGEHGYELLPPWESAGVVFDALAAAVSQAGGQPAGLGARDTLRTEMGYPLHGHELSPDISPLQARCGWAIGWKKEAFFGRDALLAEKEAGPRRLLRGLRMVGRGVLRAGLTVLVGDTPVGVTTSGTFSPTLQAGIALALIDTDADVRDGQKVTVDVRGRAATCEVVRPPFVAVKTR</sequence>
<accession>A0QEZ6</accession>
<comment type="function">
    <text evidence="1">The glycine cleavage system catalyzes the degradation of glycine.</text>
</comment>
<comment type="catalytic activity">
    <reaction evidence="1">
        <text>N(6)-[(R)-S(8)-aminomethyldihydrolipoyl]-L-lysyl-[protein] + (6S)-5,6,7,8-tetrahydrofolate = N(6)-[(R)-dihydrolipoyl]-L-lysyl-[protein] + (6R)-5,10-methylene-5,6,7,8-tetrahydrofolate + NH4(+)</text>
        <dbReference type="Rhea" id="RHEA:16945"/>
        <dbReference type="Rhea" id="RHEA-COMP:10475"/>
        <dbReference type="Rhea" id="RHEA-COMP:10492"/>
        <dbReference type="ChEBI" id="CHEBI:15636"/>
        <dbReference type="ChEBI" id="CHEBI:28938"/>
        <dbReference type="ChEBI" id="CHEBI:57453"/>
        <dbReference type="ChEBI" id="CHEBI:83100"/>
        <dbReference type="ChEBI" id="CHEBI:83143"/>
        <dbReference type="EC" id="2.1.2.10"/>
    </reaction>
</comment>
<comment type="subunit">
    <text evidence="1">The glycine cleavage system is composed of four proteins: P, T, L and H.</text>
</comment>
<comment type="similarity">
    <text evidence="1">Belongs to the GcvT family.</text>
</comment>
<feature type="chain" id="PRO_1000047679" description="Aminomethyltransferase">
    <location>
        <begin position="1"/>
        <end position="367"/>
    </location>
</feature>
<organism>
    <name type="scientific">Mycobacterium avium (strain 104)</name>
    <dbReference type="NCBI Taxonomy" id="243243"/>
    <lineage>
        <taxon>Bacteria</taxon>
        <taxon>Bacillati</taxon>
        <taxon>Actinomycetota</taxon>
        <taxon>Actinomycetes</taxon>
        <taxon>Mycobacteriales</taxon>
        <taxon>Mycobacteriaceae</taxon>
        <taxon>Mycobacterium</taxon>
        <taxon>Mycobacterium avium complex (MAC)</taxon>
    </lineage>
</organism>
<evidence type="ECO:0000255" key="1">
    <source>
        <dbReference type="HAMAP-Rule" id="MF_00259"/>
    </source>
</evidence>
<proteinExistence type="inferred from homology"/>
<name>GCST_MYCA1</name>
<gene>
    <name evidence="1" type="primary">gcvT</name>
    <name type="ordered locus">MAV_2280</name>
</gene>
<protein>
    <recommendedName>
        <fullName evidence="1">Aminomethyltransferase</fullName>
        <ecNumber evidence="1">2.1.2.10</ecNumber>
    </recommendedName>
    <alternativeName>
        <fullName evidence="1">Glycine cleavage system T protein</fullName>
    </alternativeName>
</protein>
<reference key="1">
    <citation type="submission" date="2006-10" db="EMBL/GenBank/DDBJ databases">
        <authorList>
            <person name="Fleischmann R.D."/>
            <person name="Dodson R.J."/>
            <person name="Haft D.H."/>
            <person name="Merkel J.S."/>
            <person name="Nelson W.C."/>
            <person name="Fraser C.M."/>
        </authorList>
    </citation>
    <scope>NUCLEOTIDE SEQUENCE [LARGE SCALE GENOMIC DNA]</scope>
    <source>
        <strain>104</strain>
    </source>
</reference>